<proteinExistence type="inferred from homology"/>
<organism>
    <name type="scientific">Tolumonas auensis (strain DSM 9187 / NBRC 110442 / TA 4)</name>
    <dbReference type="NCBI Taxonomy" id="595494"/>
    <lineage>
        <taxon>Bacteria</taxon>
        <taxon>Pseudomonadati</taxon>
        <taxon>Pseudomonadota</taxon>
        <taxon>Gammaproteobacteria</taxon>
        <taxon>Aeromonadales</taxon>
        <taxon>Aeromonadaceae</taxon>
        <taxon>Tolumonas</taxon>
    </lineage>
</organism>
<accession>C4LG01</accession>
<keyword id="KW-0028">Amino-acid biosynthesis</keyword>
<keyword id="KW-0368">Histidine biosynthesis</keyword>
<keyword id="KW-0378">Hydrolase</keyword>
<keyword id="KW-0486">Methionine biosynthesis</keyword>
<keyword id="KW-0511">Multifunctional enzyme</keyword>
<keyword id="KW-0521">NADP</keyword>
<keyword id="KW-0554">One-carbon metabolism</keyword>
<keyword id="KW-0560">Oxidoreductase</keyword>
<keyword id="KW-0658">Purine biosynthesis</keyword>
<keyword id="KW-1185">Reference proteome</keyword>
<name>FOLD_TOLAT</name>
<reference key="1">
    <citation type="submission" date="2009-05" db="EMBL/GenBank/DDBJ databases">
        <title>Complete sequence of Tolumonas auensis DSM 9187.</title>
        <authorList>
            <consortium name="US DOE Joint Genome Institute"/>
            <person name="Lucas S."/>
            <person name="Copeland A."/>
            <person name="Lapidus A."/>
            <person name="Glavina del Rio T."/>
            <person name="Tice H."/>
            <person name="Bruce D."/>
            <person name="Goodwin L."/>
            <person name="Pitluck S."/>
            <person name="Chertkov O."/>
            <person name="Brettin T."/>
            <person name="Detter J.C."/>
            <person name="Han C."/>
            <person name="Larimer F."/>
            <person name="Land M."/>
            <person name="Hauser L."/>
            <person name="Kyrpides N."/>
            <person name="Mikhailova N."/>
            <person name="Spring S."/>
            <person name="Beller H."/>
        </authorList>
    </citation>
    <scope>NUCLEOTIDE SEQUENCE [LARGE SCALE GENOMIC DNA]</scope>
    <source>
        <strain>DSM 9187 / NBRC 110442 / TA 4</strain>
    </source>
</reference>
<feature type="chain" id="PRO_1000215610" description="Bifunctional protein FolD">
    <location>
        <begin position="1"/>
        <end position="284"/>
    </location>
</feature>
<feature type="binding site" evidence="1">
    <location>
        <begin position="166"/>
        <end position="168"/>
    </location>
    <ligand>
        <name>NADP(+)</name>
        <dbReference type="ChEBI" id="CHEBI:58349"/>
    </ligand>
</feature>
<feature type="binding site" evidence="1">
    <location>
        <position position="232"/>
    </location>
    <ligand>
        <name>NADP(+)</name>
        <dbReference type="ChEBI" id="CHEBI:58349"/>
    </ligand>
</feature>
<protein>
    <recommendedName>
        <fullName evidence="1">Bifunctional protein FolD</fullName>
    </recommendedName>
    <domain>
        <recommendedName>
            <fullName evidence="1">Methylenetetrahydrofolate dehydrogenase</fullName>
            <ecNumber evidence="1">1.5.1.5</ecNumber>
        </recommendedName>
    </domain>
    <domain>
        <recommendedName>
            <fullName evidence="1">Methenyltetrahydrofolate cyclohydrolase</fullName>
            <ecNumber evidence="1">3.5.4.9</ecNumber>
        </recommendedName>
    </domain>
</protein>
<comment type="function">
    <text evidence="1">Catalyzes the oxidation of 5,10-methylenetetrahydrofolate to 5,10-methenyltetrahydrofolate and then the hydrolysis of 5,10-methenyltetrahydrofolate to 10-formyltetrahydrofolate.</text>
</comment>
<comment type="catalytic activity">
    <reaction evidence="1">
        <text>(6R)-5,10-methylene-5,6,7,8-tetrahydrofolate + NADP(+) = (6R)-5,10-methenyltetrahydrofolate + NADPH</text>
        <dbReference type="Rhea" id="RHEA:22812"/>
        <dbReference type="ChEBI" id="CHEBI:15636"/>
        <dbReference type="ChEBI" id="CHEBI:57455"/>
        <dbReference type="ChEBI" id="CHEBI:57783"/>
        <dbReference type="ChEBI" id="CHEBI:58349"/>
        <dbReference type="EC" id="1.5.1.5"/>
    </reaction>
</comment>
<comment type="catalytic activity">
    <reaction evidence="1">
        <text>(6R)-5,10-methenyltetrahydrofolate + H2O = (6R)-10-formyltetrahydrofolate + H(+)</text>
        <dbReference type="Rhea" id="RHEA:23700"/>
        <dbReference type="ChEBI" id="CHEBI:15377"/>
        <dbReference type="ChEBI" id="CHEBI:15378"/>
        <dbReference type="ChEBI" id="CHEBI:57455"/>
        <dbReference type="ChEBI" id="CHEBI:195366"/>
        <dbReference type="EC" id="3.5.4.9"/>
    </reaction>
</comment>
<comment type="pathway">
    <text evidence="1">One-carbon metabolism; tetrahydrofolate interconversion.</text>
</comment>
<comment type="subunit">
    <text evidence="1">Homodimer.</text>
</comment>
<comment type="similarity">
    <text evidence="1">Belongs to the tetrahydrofolate dehydrogenase/cyclohydrolase family.</text>
</comment>
<gene>
    <name evidence="1" type="primary">folD</name>
    <name type="ordered locus">Tola_1915</name>
</gene>
<evidence type="ECO:0000255" key="1">
    <source>
        <dbReference type="HAMAP-Rule" id="MF_01576"/>
    </source>
</evidence>
<sequence>MSAKIIDGKAIALSVRQRVAARVAERKAKGLRAPGLAVVLVGEDAASQVYVGSKRRACEEVGFISKSYDLAPTITQDELLALIDQLNADPTIDGVLVQLPLPAHLDSTQVIERILPNKDVDGFHPYNVGRLAQRIPALRPCTPKGMMTLLENTGVKIKGMHAVVVGASNIVGRPMTLELLLAGCTTTTCHRFTKGLEQFVRQADILVVAVGKAEFIPGEWIKPGAIVLDVGINRLSNGKLVGDVEYPTAAQHASFITPVPGGVGPMTVATLIENTLQACEQYHS</sequence>
<dbReference type="EC" id="1.5.1.5" evidence="1"/>
<dbReference type="EC" id="3.5.4.9" evidence="1"/>
<dbReference type="EMBL" id="CP001616">
    <property type="protein sequence ID" value="ACQ93518.1"/>
    <property type="molecule type" value="Genomic_DNA"/>
</dbReference>
<dbReference type="RefSeq" id="WP_015878986.1">
    <property type="nucleotide sequence ID" value="NC_012691.1"/>
</dbReference>
<dbReference type="SMR" id="C4LG01"/>
<dbReference type="STRING" id="595494.Tola_1915"/>
<dbReference type="KEGG" id="tau:Tola_1915"/>
<dbReference type="eggNOG" id="COG0190">
    <property type="taxonomic scope" value="Bacteria"/>
</dbReference>
<dbReference type="HOGENOM" id="CLU_034045_2_1_6"/>
<dbReference type="OrthoDB" id="9803580at2"/>
<dbReference type="UniPathway" id="UPA00193"/>
<dbReference type="Proteomes" id="UP000009073">
    <property type="component" value="Chromosome"/>
</dbReference>
<dbReference type="GO" id="GO:0005829">
    <property type="term" value="C:cytosol"/>
    <property type="evidence" value="ECO:0007669"/>
    <property type="project" value="TreeGrafter"/>
</dbReference>
<dbReference type="GO" id="GO:0004477">
    <property type="term" value="F:methenyltetrahydrofolate cyclohydrolase activity"/>
    <property type="evidence" value="ECO:0007669"/>
    <property type="project" value="UniProtKB-UniRule"/>
</dbReference>
<dbReference type="GO" id="GO:0004488">
    <property type="term" value="F:methylenetetrahydrofolate dehydrogenase (NADP+) activity"/>
    <property type="evidence" value="ECO:0007669"/>
    <property type="project" value="UniProtKB-UniRule"/>
</dbReference>
<dbReference type="GO" id="GO:0000105">
    <property type="term" value="P:L-histidine biosynthetic process"/>
    <property type="evidence" value="ECO:0007669"/>
    <property type="project" value="UniProtKB-KW"/>
</dbReference>
<dbReference type="GO" id="GO:0009086">
    <property type="term" value="P:methionine biosynthetic process"/>
    <property type="evidence" value="ECO:0007669"/>
    <property type="project" value="UniProtKB-KW"/>
</dbReference>
<dbReference type="GO" id="GO:0006164">
    <property type="term" value="P:purine nucleotide biosynthetic process"/>
    <property type="evidence" value="ECO:0007669"/>
    <property type="project" value="UniProtKB-KW"/>
</dbReference>
<dbReference type="GO" id="GO:0035999">
    <property type="term" value="P:tetrahydrofolate interconversion"/>
    <property type="evidence" value="ECO:0007669"/>
    <property type="project" value="UniProtKB-UniRule"/>
</dbReference>
<dbReference type="CDD" id="cd01080">
    <property type="entry name" value="NAD_bind_m-THF_DH_Cyclohyd"/>
    <property type="match status" value="1"/>
</dbReference>
<dbReference type="FunFam" id="3.40.50.10860:FF:000001">
    <property type="entry name" value="Bifunctional protein FolD"/>
    <property type="match status" value="1"/>
</dbReference>
<dbReference type="FunFam" id="3.40.50.720:FF:000006">
    <property type="entry name" value="Bifunctional protein FolD"/>
    <property type="match status" value="1"/>
</dbReference>
<dbReference type="Gene3D" id="3.40.50.10860">
    <property type="entry name" value="Leucine Dehydrogenase, chain A, domain 1"/>
    <property type="match status" value="1"/>
</dbReference>
<dbReference type="Gene3D" id="3.40.50.720">
    <property type="entry name" value="NAD(P)-binding Rossmann-like Domain"/>
    <property type="match status" value="1"/>
</dbReference>
<dbReference type="HAMAP" id="MF_01576">
    <property type="entry name" value="THF_DHG_CYH"/>
    <property type="match status" value="1"/>
</dbReference>
<dbReference type="InterPro" id="IPR046346">
    <property type="entry name" value="Aminoacid_DH-like_N_sf"/>
</dbReference>
<dbReference type="InterPro" id="IPR036291">
    <property type="entry name" value="NAD(P)-bd_dom_sf"/>
</dbReference>
<dbReference type="InterPro" id="IPR000672">
    <property type="entry name" value="THF_DH/CycHdrlase"/>
</dbReference>
<dbReference type="InterPro" id="IPR020630">
    <property type="entry name" value="THF_DH/CycHdrlase_cat_dom"/>
</dbReference>
<dbReference type="InterPro" id="IPR020867">
    <property type="entry name" value="THF_DH/CycHdrlase_CS"/>
</dbReference>
<dbReference type="InterPro" id="IPR020631">
    <property type="entry name" value="THF_DH/CycHdrlase_NAD-bd_dom"/>
</dbReference>
<dbReference type="NCBIfam" id="NF008058">
    <property type="entry name" value="PRK10792.1"/>
    <property type="match status" value="1"/>
</dbReference>
<dbReference type="NCBIfam" id="NF010783">
    <property type="entry name" value="PRK14186.1"/>
    <property type="match status" value="1"/>
</dbReference>
<dbReference type="PANTHER" id="PTHR48099:SF5">
    <property type="entry name" value="C-1-TETRAHYDROFOLATE SYNTHASE, CYTOPLASMIC"/>
    <property type="match status" value="1"/>
</dbReference>
<dbReference type="PANTHER" id="PTHR48099">
    <property type="entry name" value="C-1-TETRAHYDROFOLATE SYNTHASE, CYTOPLASMIC-RELATED"/>
    <property type="match status" value="1"/>
</dbReference>
<dbReference type="Pfam" id="PF00763">
    <property type="entry name" value="THF_DHG_CYH"/>
    <property type="match status" value="1"/>
</dbReference>
<dbReference type="Pfam" id="PF02882">
    <property type="entry name" value="THF_DHG_CYH_C"/>
    <property type="match status" value="1"/>
</dbReference>
<dbReference type="PRINTS" id="PR00085">
    <property type="entry name" value="THFDHDRGNASE"/>
</dbReference>
<dbReference type="SUPFAM" id="SSF53223">
    <property type="entry name" value="Aminoacid dehydrogenase-like, N-terminal domain"/>
    <property type="match status" value="1"/>
</dbReference>
<dbReference type="SUPFAM" id="SSF51735">
    <property type="entry name" value="NAD(P)-binding Rossmann-fold domains"/>
    <property type="match status" value="1"/>
</dbReference>
<dbReference type="PROSITE" id="PS00766">
    <property type="entry name" value="THF_DHG_CYH_1"/>
    <property type="match status" value="1"/>
</dbReference>
<dbReference type="PROSITE" id="PS00767">
    <property type="entry name" value="THF_DHG_CYH_2"/>
    <property type="match status" value="1"/>
</dbReference>